<keyword id="KW-0963">Cytoplasm</keyword>
<keyword id="KW-0489">Methyltransferase</keyword>
<keyword id="KW-1185">Reference proteome</keyword>
<keyword id="KW-0698">rRNA processing</keyword>
<keyword id="KW-0949">S-adenosyl-L-methionine</keyword>
<keyword id="KW-0808">Transferase</keyword>
<protein>
    <recommendedName>
        <fullName evidence="1">Ribosomal RNA small subunit methyltransferase G</fullName>
        <ecNumber evidence="1">2.1.1.-</ecNumber>
    </recommendedName>
    <alternativeName>
        <fullName evidence="1">16S rRNA 7-methylguanosine methyltransferase</fullName>
        <shortName evidence="1">16S rRNA m7G methyltransferase</shortName>
    </alternativeName>
</protein>
<reference key="1">
    <citation type="journal article" date="2010" name="Environ. Microbiol.">
        <title>The genome of Syntrophomonas wolfei: new insights into syntrophic metabolism and biohydrogen production.</title>
        <authorList>
            <person name="Sieber J.R."/>
            <person name="Sims D.R."/>
            <person name="Han C."/>
            <person name="Kim E."/>
            <person name="Lykidis A."/>
            <person name="Lapidus A.L."/>
            <person name="McDonnald E."/>
            <person name="Rohlin L."/>
            <person name="Culley D.E."/>
            <person name="Gunsalus R."/>
            <person name="McInerney M.J."/>
        </authorList>
    </citation>
    <scope>NUCLEOTIDE SEQUENCE [LARGE SCALE GENOMIC DNA]</scope>
    <source>
        <strain>DSM 2245B / Goettingen</strain>
    </source>
</reference>
<evidence type="ECO:0000255" key="1">
    <source>
        <dbReference type="HAMAP-Rule" id="MF_00074"/>
    </source>
</evidence>
<dbReference type="EC" id="2.1.1.-" evidence="1"/>
<dbReference type="EMBL" id="CP000448">
    <property type="protein sequence ID" value="ABI69857.1"/>
    <property type="molecule type" value="Genomic_DNA"/>
</dbReference>
<dbReference type="RefSeq" id="WP_011641937.1">
    <property type="nucleotide sequence ID" value="NC_008346.1"/>
</dbReference>
<dbReference type="SMR" id="Q0ATU7"/>
<dbReference type="STRING" id="335541.Swol_2570"/>
<dbReference type="KEGG" id="swo:Swol_2570"/>
<dbReference type="eggNOG" id="COG0357">
    <property type="taxonomic scope" value="Bacteria"/>
</dbReference>
<dbReference type="HOGENOM" id="CLU_065341_0_1_9"/>
<dbReference type="OrthoDB" id="9808773at2"/>
<dbReference type="Proteomes" id="UP000001968">
    <property type="component" value="Chromosome"/>
</dbReference>
<dbReference type="GO" id="GO:0005829">
    <property type="term" value="C:cytosol"/>
    <property type="evidence" value="ECO:0007669"/>
    <property type="project" value="TreeGrafter"/>
</dbReference>
<dbReference type="GO" id="GO:0070043">
    <property type="term" value="F:rRNA (guanine-N7-)-methyltransferase activity"/>
    <property type="evidence" value="ECO:0007669"/>
    <property type="project" value="UniProtKB-UniRule"/>
</dbReference>
<dbReference type="Gene3D" id="3.40.50.150">
    <property type="entry name" value="Vaccinia Virus protein VP39"/>
    <property type="match status" value="1"/>
</dbReference>
<dbReference type="HAMAP" id="MF_00074">
    <property type="entry name" value="16SrRNA_methyltr_G"/>
    <property type="match status" value="1"/>
</dbReference>
<dbReference type="InterPro" id="IPR003682">
    <property type="entry name" value="rRNA_ssu_MeTfrase_G"/>
</dbReference>
<dbReference type="InterPro" id="IPR029063">
    <property type="entry name" value="SAM-dependent_MTases_sf"/>
</dbReference>
<dbReference type="NCBIfam" id="TIGR00138">
    <property type="entry name" value="rsmG_gidB"/>
    <property type="match status" value="1"/>
</dbReference>
<dbReference type="PANTHER" id="PTHR31760">
    <property type="entry name" value="S-ADENOSYL-L-METHIONINE-DEPENDENT METHYLTRANSFERASES SUPERFAMILY PROTEIN"/>
    <property type="match status" value="1"/>
</dbReference>
<dbReference type="PANTHER" id="PTHR31760:SF0">
    <property type="entry name" value="S-ADENOSYL-L-METHIONINE-DEPENDENT METHYLTRANSFERASES SUPERFAMILY PROTEIN"/>
    <property type="match status" value="1"/>
</dbReference>
<dbReference type="Pfam" id="PF02527">
    <property type="entry name" value="GidB"/>
    <property type="match status" value="1"/>
</dbReference>
<dbReference type="PIRSF" id="PIRSF003078">
    <property type="entry name" value="GidB"/>
    <property type="match status" value="1"/>
</dbReference>
<dbReference type="SUPFAM" id="SSF53335">
    <property type="entry name" value="S-adenosyl-L-methionine-dependent methyltransferases"/>
    <property type="match status" value="1"/>
</dbReference>
<accession>Q0ATU7</accession>
<sequence length="214" mass="24304">MEYNVKTFKEMLIEENSRHNLVSRKSLPVELEKHIEDSRSLLNFMDLKGSRVVDIGSGAGFPGLVLAIYCPEGEFLLLESDLKKTEFLQAVINRCGLKNCQVLRKRIEEVGRSELRNSFDFCSCRALAMMNIVLEYGLPLLRLGGKLLLWKGKNYSREIEQAANALDILGGKVVDIFTYSLMAERDRAIVVVEKERDTPAKYPRRVGIPAKRPL</sequence>
<organism>
    <name type="scientific">Syntrophomonas wolfei subsp. wolfei (strain DSM 2245B / Goettingen)</name>
    <dbReference type="NCBI Taxonomy" id="335541"/>
    <lineage>
        <taxon>Bacteria</taxon>
        <taxon>Bacillati</taxon>
        <taxon>Bacillota</taxon>
        <taxon>Clostridia</taxon>
        <taxon>Eubacteriales</taxon>
        <taxon>Syntrophomonadaceae</taxon>
        <taxon>Syntrophomonas</taxon>
    </lineage>
</organism>
<comment type="function">
    <text evidence="1">Specifically methylates the N7 position of a guanine in 16S rRNA.</text>
</comment>
<comment type="subcellular location">
    <subcellularLocation>
        <location evidence="1">Cytoplasm</location>
    </subcellularLocation>
</comment>
<comment type="similarity">
    <text evidence="1">Belongs to the methyltransferase superfamily. RNA methyltransferase RsmG family.</text>
</comment>
<feature type="chain" id="PRO_1000010232" description="Ribosomal RNA small subunit methyltransferase G">
    <location>
        <begin position="1"/>
        <end position="214"/>
    </location>
</feature>
<feature type="binding site" evidence="1">
    <location>
        <position position="56"/>
    </location>
    <ligand>
        <name>S-adenosyl-L-methionine</name>
        <dbReference type="ChEBI" id="CHEBI:59789"/>
    </ligand>
</feature>
<feature type="binding site" evidence="1">
    <location>
        <position position="61"/>
    </location>
    <ligand>
        <name>S-adenosyl-L-methionine</name>
        <dbReference type="ChEBI" id="CHEBI:59789"/>
    </ligand>
</feature>
<feature type="binding site" evidence="1">
    <location>
        <begin position="107"/>
        <end position="108"/>
    </location>
    <ligand>
        <name>S-adenosyl-L-methionine</name>
        <dbReference type="ChEBI" id="CHEBI:59789"/>
    </ligand>
</feature>
<feature type="binding site" evidence="1">
    <location>
        <position position="125"/>
    </location>
    <ligand>
        <name>S-adenosyl-L-methionine</name>
        <dbReference type="ChEBI" id="CHEBI:59789"/>
    </ligand>
</feature>
<name>RSMG_SYNWW</name>
<gene>
    <name evidence="1" type="primary">rsmG</name>
    <name type="ordered locus">Swol_2570</name>
</gene>
<proteinExistence type="inferred from homology"/>